<comment type="function">
    <text evidence="2 5 6 7 8">DNA mismatch repair protein specifically involved in maintenance of mitochondrial genome configuration by controlling specific rearranged portion. Functions by suppressing asymmetric recombination at some repeat pairs.</text>
</comment>
<comment type="subcellular location">
    <subcellularLocation>
        <location evidence="2 4 5">Mitochondrion</location>
    </subcellularLocation>
    <subcellularLocation>
        <location evidence="2 4">Plastid</location>
        <location evidence="2 4">Chloroplast</location>
    </subcellularLocation>
    <text evidence="4">Predominantly targeted to the mitochondrion.</text>
</comment>
<comment type="disruption phenotype">
    <text evidence="2 3">Variegated plants and appearance of specific new restriction fragments in the mitochondrial genome.</text>
</comment>
<comment type="similarity">
    <text evidence="9">Belongs to the DNA mismatch repair MutS family.</text>
</comment>
<comment type="sequence caution" evidence="9">
    <conflict type="erroneous gene model prediction">
        <sequence resource="EMBL-CDS" id="BAB02932"/>
    </conflict>
</comment>
<reference key="1">
    <citation type="journal article" date="2003" name="Proc. Natl. Acad. Sci. U.S.A.">
        <title>Substoichiometric shifting in the plant mitochondrial genome is influenced by a gene homologous to MutS.</title>
        <authorList>
            <person name="Abdelnoor R.V."/>
            <person name="Yule R."/>
            <person name="Elo A."/>
            <person name="Christensen A.C."/>
            <person name="Meyer-Gauen G."/>
            <person name="Mackenzie S.A."/>
        </authorList>
    </citation>
    <scope>NUCLEOTIDE SEQUENCE [MRNA]</scope>
    <scope>FUNCTION</scope>
    <scope>SUBCELLULAR LOCATION</scope>
    <scope>DISRUPTION PHENOTYPE</scope>
    <scope>MUTAGENESIS OF CYS-874</scope>
    <source>
        <strain>cv. Columbia</strain>
    </source>
</reference>
<reference key="2">
    <citation type="journal article" date="2000" name="DNA Res.">
        <title>Structural analysis of Arabidopsis thaliana chromosome 3. II. Sequence features of the 4,251,695 bp regions covered by 90 P1, TAC and BAC clones.</title>
        <authorList>
            <person name="Kaneko T."/>
            <person name="Katoh T."/>
            <person name="Sato S."/>
            <person name="Nakamura Y."/>
            <person name="Asamizu E."/>
            <person name="Tabata S."/>
        </authorList>
    </citation>
    <scope>NUCLEOTIDE SEQUENCE [LARGE SCALE GENOMIC DNA]</scope>
    <source>
        <strain>cv. Columbia</strain>
    </source>
</reference>
<reference key="3">
    <citation type="journal article" date="2017" name="Plant J.">
        <title>Araport11: a complete reannotation of the Arabidopsis thaliana reference genome.</title>
        <authorList>
            <person name="Cheng C.Y."/>
            <person name="Krishnakumar V."/>
            <person name="Chan A.P."/>
            <person name="Thibaud-Nissen F."/>
            <person name="Schobel S."/>
            <person name="Town C.D."/>
        </authorList>
    </citation>
    <scope>GENOME REANNOTATION</scope>
    <source>
        <strain>cv. Columbia</strain>
    </source>
</reference>
<reference key="4">
    <citation type="journal article" date="1992" name="Plant Cell">
        <title>Mutations at the Arabidopsis CHM locus promote rearrangements of the mitochondrial genome.</title>
        <authorList>
            <person name="Martinez-Zapater J.M."/>
            <person name="Gil P."/>
            <person name="Capel J."/>
            <person name="Somerville C.R."/>
        </authorList>
    </citation>
    <scope>DISRUPTION PHENOTYPE</scope>
</reference>
<reference key="5">
    <citation type="journal article" date="2005" name="Plant Cell">
        <title>Dual-domain, dual-targeting organellar protein presequences in Arabidopsis can use non-AUG start codons.</title>
        <authorList>
            <person name="Christensen A.C."/>
            <person name="Lyznik A."/>
            <person name="Mohammed S."/>
            <person name="Elowsky C.G."/>
            <person name="Elo A."/>
            <person name="Yule R."/>
            <person name="Mackenzie S.A."/>
        </authorList>
    </citation>
    <scope>SUBCELLULAR LOCATION</scope>
</reference>
<reference key="6">
    <citation type="journal article" date="2006" name="J. Mol. Evol.">
        <title>Mitochondrial genome dynamics in plants and animals: convergent gene fusions of a MutS homologue.</title>
        <authorList>
            <person name="Abdelnoor R.V."/>
            <person name="Christensen A.C."/>
            <person name="Mohammed S."/>
            <person name="Munoz-Castillo B."/>
            <person name="Moriyama H."/>
            <person name="Mackenzie S.A."/>
        </authorList>
    </citation>
    <scope>FUNCTION</scope>
    <scope>SUBCELLULAR LOCATION</scope>
    <scope>MUTAGENESIS OF ASP-847; CYS-874 AND PRO-1018</scope>
</reference>
<reference key="7">
    <citation type="journal article" date="2009" name="Genetics">
        <title>Diversity of the Arabidopsis mitochondrial genome occurs via nuclear-controlled recombination activity.</title>
        <authorList>
            <person name="Arrieta-Montiel M.P."/>
            <person name="Shedge V."/>
            <person name="Davila J."/>
            <person name="Christensen A.C."/>
            <person name="Mackenzie S.A."/>
        </authorList>
    </citation>
    <scope>FUNCTION</scope>
</reference>
<reference key="8">
    <citation type="journal article" date="2010" name="Plant Physiol.">
        <title>Extensive rearrangement of the Arabidopsis mitochondrial genome elicits cellular conditions for thermotolerance.</title>
        <authorList>
            <person name="Shedge V."/>
            <person name="Davila J."/>
            <person name="Arrieta-Montiel M.P."/>
            <person name="Mohammed S."/>
            <person name="Mackenzie S.A."/>
        </authorList>
    </citation>
    <scope>FUNCTION</scope>
</reference>
<reference key="9">
    <citation type="journal article" date="2012" name="Theor. Appl. Genet.">
        <title>Utility of in vitro culture to the study of plant mitochondrial genome configuration and its dynamic features.</title>
        <authorList>
            <person name="Sun P."/>
            <person name="Arrieta-Montiel M.P."/>
            <person name="Mackenzie S.A."/>
        </authorList>
    </citation>
    <scope>FUNCTION</scope>
</reference>
<gene>
    <name type="primary">MSH1</name>
    <name type="synonym">CHM</name>
    <name type="synonym">CHM1</name>
    <name type="ordered locus">At3g24320</name>
    <name type="ORF">K7M2.9</name>
</gene>
<sequence>MHWIATRNAVVSFPKWRFFFRSSYRTYSSLKPSSPILLNRRYSEGISCLRDGKSLKRITTASKKVKTSSDVLTDKDLSHLVWWKERLQTCKKPSTLQLIERLMYTNLLGLDPSLRNGSLKDGNLNWEMLQFKSRFPREVLLCRVGEFYEAIGIDACILVEYAGLNPFGGLRSDSIPKAGCPIMNLRQTLDDLTRNGYSVCIVEEVQGPTPARSRKGRFISGHAHPGSPYVYGLVGVDHDLDFPDPMPVVGISRSARGYCMISIFETMKAYSLDDGLTEEALVTKLRTRRCHHLFLHASLRHNASGTCRWGEFGEGGLLWGECSSRNFEWFEGDTLSELLSRVKDVYGLDDEVSFRNVNVPSKNRPRPLHLGTATQIGALPTEGIPCLLKVLLPSTCSGLPSLYVRDLLLNPPAYDIALKIQETCKLMSTVTCSIPEFTCVSSAKLVKLLEQREANYIEFCRIKNVLDDVLHMHRHAELVEILKLLMDPTWVATGLKIDFDTFVNECHWASDTIGEMISLDENESHQNVSKCDNVPNEFFYDMESSWRGRVKGIHIEEEITQVEKSAEALSLAVAEDFHPIISRIKATTASLGGPKGEIAYAREHESVWFKGKRFTPSIWAGTAGEDQIKQLKPALDSKGKKVGEEWFTTPKVEIALVRYHEASENAKARVLELLRELSVKLQTKINVLVFASMLLVISKALFSHACEGRRRKWVFPTLVGFSLDEGAKPLDGASRMKLTGLSPYWFDVSSGTAVHNTVDMQSLFLLTGPNGGGKSSLLRSICAAALLGISGLMVPAESACIPHFDSIMLHMKSYDSPVDGKSSFQVEMSEIRSIVSQATSRSLVLIDEICRGTETAKGTCIAGSVVESLDTSGCLGIVSTHLHGIFSLPLTAKNITYKAMGAENVEGQTKPTWKLTDGVCRESLAFETAKREGVPESVIQRAEALYLSVYAKDASAEVVKPDQIITSSNNDQQIQKPVSSERSLEKDLAKAIVKICGKKMIEPEAIECLSIGARELPPPSTVGSSCVYVMRRPDKRLYIGQTDDLEGRIRAHRAKEGLQGSSFLYLMVQGKSMACQLETLLINQLHEQGYSLANLADGKHRNFGTSSSLSTSDVVSIL</sequence>
<keyword id="KW-0067">ATP-binding</keyword>
<keyword id="KW-0150">Chloroplast</keyword>
<keyword id="KW-0227">DNA damage</keyword>
<keyword id="KW-0234">DNA repair</keyword>
<keyword id="KW-0238">DNA-binding</keyword>
<keyword id="KW-0496">Mitochondrion</keyword>
<keyword id="KW-0547">Nucleotide-binding</keyword>
<keyword id="KW-0934">Plastid</keyword>
<keyword id="KW-1185">Reference proteome</keyword>
<keyword id="KW-0809">Transit peptide</keyword>
<proteinExistence type="evidence at protein level"/>
<dbReference type="EMBL" id="AY191303">
    <property type="protein sequence ID" value="AAO49798.1"/>
    <property type="molecule type" value="mRNA"/>
</dbReference>
<dbReference type="EMBL" id="AP000382">
    <property type="protein sequence ID" value="BAB02932.1"/>
    <property type="status" value="ALT_SEQ"/>
    <property type="molecule type" value="Genomic_DNA"/>
</dbReference>
<dbReference type="EMBL" id="CP002686">
    <property type="protein sequence ID" value="AEE76889.1"/>
    <property type="molecule type" value="Genomic_DNA"/>
</dbReference>
<dbReference type="RefSeq" id="NP_189075.2">
    <property type="nucleotide sequence ID" value="NM_113339.4"/>
</dbReference>
<dbReference type="SMR" id="Q84LK0"/>
<dbReference type="FunCoup" id="Q84LK0">
    <property type="interactions" value="727"/>
</dbReference>
<dbReference type="STRING" id="3702.Q84LK0"/>
<dbReference type="GlyGen" id="Q84LK0">
    <property type="glycosylation" value="1 site"/>
</dbReference>
<dbReference type="PaxDb" id="3702-AT3G24320.1"/>
<dbReference type="ProteomicsDB" id="238913"/>
<dbReference type="EnsemblPlants" id="AT3G24320.1">
    <property type="protein sequence ID" value="AT3G24320.1"/>
    <property type="gene ID" value="AT3G24320"/>
</dbReference>
<dbReference type="GeneID" id="822021"/>
<dbReference type="Gramene" id="AT3G24320.1">
    <property type="protein sequence ID" value="AT3G24320.1"/>
    <property type="gene ID" value="AT3G24320"/>
</dbReference>
<dbReference type="KEGG" id="ath:AT3G24320"/>
<dbReference type="Araport" id="AT3G24320"/>
<dbReference type="TAIR" id="AT3G24320">
    <property type="gene designation" value="MSH1"/>
</dbReference>
<dbReference type="eggNOG" id="KOG0217">
    <property type="taxonomic scope" value="Eukaryota"/>
</dbReference>
<dbReference type="HOGENOM" id="CLU_002472_6_0_1"/>
<dbReference type="InParanoid" id="Q84LK0"/>
<dbReference type="OMA" id="LMGSITC"/>
<dbReference type="OrthoDB" id="10252754at2759"/>
<dbReference type="PhylomeDB" id="Q84LK0"/>
<dbReference type="PRO" id="PR:Q84LK0"/>
<dbReference type="Proteomes" id="UP000006548">
    <property type="component" value="Chromosome 3"/>
</dbReference>
<dbReference type="ExpressionAtlas" id="Q84LK0">
    <property type="expression patterns" value="baseline and differential"/>
</dbReference>
<dbReference type="GO" id="GO:0009507">
    <property type="term" value="C:chloroplast"/>
    <property type="evidence" value="ECO:0000314"/>
    <property type="project" value="TAIR"/>
</dbReference>
<dbReference type="GO" id="GO:0005739">
    <property type="term" value="C:mitochondrion"/>
    <property type="evidence" value="ECO:0000314"/>
    <property type="project" value="TAIR"/>
</dbReference>
<dbReference type="GO" id="GO:0009536">
    <property type="term" value="C:plastid"/>
    <property type="evidence" value="ECO:0000314"/>
    <property type="project" value="TAIR"/>
</dbReference>
<dbReference type="GO" id="GO:0042651">
    <property type="term" value="C:thylakoid membrane"/>
    <property type="evidence" value="ECO:0000314"/>
    <property type="project" value="TAIR"/>
</dbReference>
<dbReference type="GO" id="GO:0005524">
    <property type="term" value="F:ATP binding"/>
    <property type="evidence" value="ECO:0007669"/>
    <property type="project" value="UniProtKB-KW"/>
</dbReference>
<dbReference type="GO" id="GO:0003677">
    <property type="term" value="F:DNA binding"/>
    <property type="evidence" value="ECO:0000314"/>
    <property type="project" value="TAIR"/>
</dbReference>
<dbReference type="GO" id="GO:0030983">
    <property type="term" value="F:mismatched DNA binding"/>
    <property type="evidence" value="ECO:0007669"/>
    <property type="project" value="InterPro"/>
</dbReference>
<dbReference type="GO" id="GO:0006298">
    <property type="term" value="P:mismatch repair"/>
    <property type="evidence" value="ECO:0007669"/>
    <property type="project" value="InterPro"/>
</dbReference>
<dbReference type="GO" id="GO:0032042">
    <property type="term" value="P:mitochondrial DNA metabolic process"/>
    <property type="evidence" value="ECO:0000315"/>
    <property type="project" value="TAIR"/>
</dbReference>
<dbReference type="GO" id="GO:0000002">
    <property type="term" value="P:mitochondrial genome maintenance"/>
    <property type="evidence" value="ECO:0000315"/>
    <property type="project" value="TAIR"/>
</dbReference>
<dbReference type="GO" id="GO:0009408">
    <property type="term" value="P:response to heat"/>
    <property type="evidence" value="ECO:0000316"/>
    <property type="project" value="TAIR"/>
</dbReference>
<dbReference type="CDD" id="cd03243">
    <property type="entry name" value="ABC_MutS_homologs"/>
    <property type="match status" value="1"/>
</dbReference>
<dbReference type="CDD" id="cd10438">
    <property type="entry name" value="GIY-YIG_MSH"/>
    <property type="match status" value="1"/>
</dbReference>
<dbReference type="FunFam" id="3.40.50.300:FF:001188">
    <property type="entry name" value="DNA mismatch repair protein"/>
    <property type="match status" value="1"/>
</dbReference>
<dbReference type="FunFam" id="3.40.1170.10:FF:000005">
    <property type="entry name" value="DNA mismatch repair protein MSH1, mitochondrial"/>
    <property type="match status" value="1"/>
</dbReference>
<dbReference type="Gene3D" id="3.40.1170.10">
    <property type="entry name" value="DNA repair protein MutS, domain I"/>
    <property type="match status" value="1"/>
</dbReference>
<dbReference type="Gene3D" id="3.40.1440.10">
    <property type="entry name" value="GIY-YIG endonuclease"/>
    <property type="match status" value="1"/>
</dbReference>
<dbReference type="Gene3D" id="3.40.50.300">
    <property type="entry name" value="P-loop containing nucleotide triphosphate hydrolases"/>
    <property type="match status" value="1"/>
</dbReference>
<dbReference type="InterPro" id="IPR007695">
    <property type="entry name" value="DNA_mismatch_repair_MutS-lik_N"/>
</dbReference>
<dbReference type="InterPro" id="IPR000432">
    <property type="entry name" value="DNA_mismatch_repair_MutS_C"/>
</dbReference>
<dbReference type="InterPro" id="IPR016151">
    <property type="entry name" value="DNA_mismatch_repair_MutS_N"/>
</dbReference>
<dbReference type="InterPro" id="IPR000305">
    <property type="entry name" value="GIY-YIG_endonuc"/>
</dbReference>
<dbReference type="InterPro" id="IPR035901">
    <property type="entry name" value="GIY-YIG_endonuc_sf"/>
</dbReference>
<dbReference type="InterPro" id="IPR053276">
    <property type="entry name" value="MtDNA_mismatch_repair_MutS"/>
</dbReference>
<dbReference type="InterPro" id="IPR027417">
    <property type="entry name" value="P-loop_NTPase"/>
</dbReference>
<dbReference type="PANTHER" id="PTHR48448">
    <property type="entry name" value="MUTL PROTEIN ISOFORM 1"/>
    <property type="match status" value="1"/>
</dbReference>
<dbReference type="PANTHER" id="PTHR48448:SF1">
    <property type="entry name" value="MUTL PROTEIN ISOFORM 1"/>
    <property type="match status" value="1"/>
</dbReference>
<dbReference type="Pfam" id="PF01541">
    <property type="entry name" value="GIY-YIG"/>
    <property type="match status" value="1"/>
</dbReference>
<dbReference type="Pfam" id="PF01624">
    <property type="entry name" value="MutS_I"/>
    <property type="match status" value="1"/>
</dbReference>
<dbReference type="Pfam" id="PF00488">
    <property type="entry name" value="MutS_V"/>
    <property type="match status" value="1"/>
</dbReference>
<dbReference type="SMART" id="SM00534">
    <property type="entry name" value="MUTSac"/>
    <property type="match status" value="1"/>
</dbReference>
<dbReference type="SUPFAM" id="SSF55271">
    <property type="entry name" value="DNA repair protein MutS, domain I"/>
    <property type="match status" value="1"/>
</dbReference>
<dbReference type="SUPFAM" id="SSF82771">
    <property type="entry name" value="GIY-YIG endonuclease"/>
    <property type="match status" value="1"/>
</dbReference>
<dbReference type="SUPFAM" id="SSF52540">
    <property type="entry name" value="P-loop containing nucleoside triphosphate hydrolases"/>
    <property type="match status" value="1"/>
</dbReference>
<dbReference type="PROSITE" id="PS00486">
    <property type="entry name" value="DNA_MISMATCH_REPAIR_2"/>
    <property type="match status" value="1"/>
</dbReference>
<accession>Q84LK0</accession>
<accession>Q9LK12</accession>
<name>MSH1_ARATH</name>
<organism>
    <name type="scientific">Arabidopsis thaliana</name>
    <name type="common">Mouse-ear cress</name>
    <dbReference type="NCBI Taxonomy" id="3702"/>
    <lineage>
        <taxon>Eukaryota</taxon>
        <taxon>Viridiplantae</taxon>
        <taxon>Streptophyta</taxon>
        <taxon>Embryophyta</taxon>
        <taxon>Tracheophyta</taxon>
        <taxon>Spermatophyta</taxon>
        <taxon>Magnoliopsida</taxon>
        <taxon>eudicotyledons</taxon>
        <taxon>Gunneridae</taxon>
        <taxon>Pentapetalae</taxon>
        <taxon>rosids</taxon>
        <taxon>malvids</taxon>
        <taxon>Brassicales</taxon>
        <taxon>Brassicaceae</taxon>
        <taxon>Camelineae</taxon>
        <taxon>Arabidopsis</taxon>
    </lineage>
</organism>
<protein>
    <recommendedName>
        <fullName>DNA mismatch repair protein MSH1, mitochondrial</fullName>
        <shortName>AtMSH1</shortName>
    </recommendedName>
    <alternativeName>
        <fullName>MutS protein homolog 1</fullName>
    </alternativeName>
    <alternativeName>
        <fullName>Protein CHLOROPLAST MUTATOR</fullName>
    </alternativeName>
</protein>
<evidence type="ECO:0000255" key="1"/>
<evidence type="ECO:0000269" key="2">
    <source>
    </source>
</evidence>
<evidence type="ECO:0000269" key="3">
    <source>
    </source>
</evidence>
<evidence type="ECO:0000269" key="4">
    <source>
    </source>
</evidence>
<evidence type="ECO:0000269" key="5">
    <source>
    </source>
</evidence>
<evidence type="ECO:0000269" key="6">
    <source>
    </source>
</evidence>
<evidence type="ECO:0000269" key="7">
    <source>
    </source>
</evidence>
<evidence type="ECO:0000269" key="8">
    <source>
    </source>
</evidence>
<evidence type="ECO:0000305" key="9"/>
<feature type="transit peptide" description="Chloroplast and mitochondrion" evidence="1">
    <location>
        <begin position="1"/>
        <end status="unknown"/>
    </location>
</feature>
<feature type="chain" id="PRO_0000418366" description="DNA mismatch repair protein MSH1, mitochondrial">
    <location>
        <begin status="unknown"/>
        <end position="1118"/>
    </location>
</feature>
<feature type="binding site" evidence="1">
    <location>
        <begin position="768"/>
        <end position="775"/>
    </location>
    <ligand>
        <name>ATP</name>
        <dbReference type="ChEBI" id="CHEBI:30616"/>
    </ligand>
</feature>
<feature type="mutagenesis site" description="In chm1-5; variegated plant phenotype." evidence="5">
    <original>D</original>
    <variation>N</variation>
    <location>
        <position position="847"/>
    </location>
</feature>
<feature type="mutagenesis site" description="In chm1-3; variegated plant phenotype." evidence="2 5">
    <original>C</original>
    <variation>Y</variation>
    <location>
        <position position="874"/>
    </location>
</feature>
<feature type="mutagenesis site" description="Variegated plant phenotype." evidence="5">
    <original>P</original>
    <variation>L</variation>
    <location>
        <position position="1018"/>
    </location>
</feature>